<organism>
    <name type="scientific">Xenopus tropicalis</name>
    <name type="common">Western clawed frog</name>
    <name type="synonym">Silurana tropicalis</name>
    <dbReference type="NCBI Taxonomy" id="8364"/>
    <lineage>
        <taxon>Eukaryota</taxon>
        <taxon>Metazoa</taxon>
        <taxon>Chordata</taxon>
        <taxon>Craniata</taxon>
        <taxon>Vertebrata</taxon>
        <taxon>Euteleostomi</taxon>
        <taxon>Amphibia</taxon>
        <taxon>Batrachia</taxon>
        <taxon>Anura</taxon>
        <taxon>Pipoidea</taxon>
        <taxon>Pipidae</taxon>
        <taxon>Xenopodinae</taxon>
        <taxon>Xenopus</taxon>
        <taxon>Silurana</taxon>
    </lineage>
</organism>
<comment type="function">
    <text evidence="1">Probable component of the NALCN channel complex, a channel that regulates the resting membrane potential and controls neuronal excitability.</text>
</comment>
<comment type="subcellular location">
    <subcellularLocation>
        <location evidence="3">Membrane</location>
        <topology evidence="3">Multi-pass membrane protein</topology>
    </subcellularLocation>
</comment>
<comment type="similarity">
    <text evidence="3">Belongs to the NALF family.</text>
</comment>
<sequence>MIRGAWMYPREDEAVLKICWEPRHSDKPCADSERAQRWRMSLASLLFFTVLLSNHLWLVSAGAKARGSFTFSLQPANSSLLPPQSFPGEGRGCWDTFLSNLTKSAAQPPHCTGVRSTHLDTACAKLHYLQRHRGSFSPSYPQPSSWSSSYWSYPPSSFSSKRNFLKAYFRNYTLSFCDTYTILDLLLGMSNPDSLDCSLESLMEDFVGAAAASPALIEGEVCSSCIQAYQRLDQHAQEKYEEFDFVLEKYLQSGEYSVRSCVGDCKAVYKAWLCSEYFNVTQRQCRHRIPCKQYCLEVQTRCPFMLPDNDDLIYGGLPGFICTDMLENHMSNTEAECCDVRWHSCKTQGSGNHNTSTKSTDSRFKYYPHHQHHRDHHLHPYHHQHHQSLLPVSAGSRLGNTRLRLCVLVLMLLHTMASFSVVQNGVTLEPLPGLDDSSSHEE</sequence>
<proteinExistence type="evidence at transcript level"/>
<accession>A4IHZ3</accession>
<name>NALF2_XENTR</name>
<reference key="1">
    <citation type="submission" date="2007-03" db="EMBL/GenBank/DDBJ databases">
        <authorList>
            <consortium name="NIH - Xenopus Gene Collection (XGC) project"/>
        </authorList>
    </citation>
    <scope>NUCLEOTIDE SEQUENCE [LARGE SCALE MRNA]</scope>
</reference>
<dbReference type="EMBL" id="BC135763">
    <property type="protein sequence ID" value="AAI35764.1"/>
    <property type="molecule type" value="mRNA"/>
</dbReference>
<dbReference type="RefSeq" id="NP_001096333.1">
    <property type="nucleotide sequence ID" value="NM_001102863.1"/>
</dbReference>
<dbReference type="SMR" id="A4IHZ3"/>
<dbReference type="FunCoup" id="A4IHZ3">
    <property type="interactions" value="425"/>
</dbReference>
<dbReference type="STRING" id="8364.ENSXETP00000022670"/>
<dbReference type="GlyCosmos" id="A4IHZ3">
    <property type="glycosylation" value="5 sites, No reported glycans"/>
</dbReference>
<dbReference type="PaxDb" id="8364-ENSXETP00000014379"/>
<dbReference type="GeneID" id="100124919"/>
<dbReference type="KEGG" id="xtr:100124919"/>
<dbReference type="AGR" id="Xenbase:XB-GENE-952379"/>
<dbReference type="CTD" id="27112"/>
<dbReference type="Xenbase" id="XB-GENE-952379">
    <property type="gene designation" value="nalf2"/>
</dbReference>
<dbReference type="eggNOG" id="ENOG502QQKW">
    <property type="taxonomic scope" value="Eukaryota"/>
</dbReference>
<dbReference type="InParanoid" id="A4IHZ3"/>
<dbReference type="OMA" id="QWVSCEA"/>
<dbReference type="OrthoDB" id="10047996at2759"/>
<dbReference type="PhylomeDB" id="A4IHZ3"/>
<dbReference type="TreeFam" id="TF331752"/>
<dbReference type="Proteomes" id="UP000008143">
    <property type="component" value="Chromosome 8"/>
</dbReference>
<dbReference type="Bgee" id="ENSXETG00000033673">
    <property type="expression patterns" value="Expressed in brain and 1 other cell type or tissue"/>
</dbReference>
<dbReference type="ExpressionAtlas" id="A4IHZ3">
    <property type="expression patterns" value="baseline and differential"/>
</dbReference>
<dbReference type="GO" id="GO:0016020">
    <property type="term" value="C:membrane"/>
    <property type="evidence" value="ECO:0007669"/>
    <property type="project" value="UniProtKB-SubCell"/>
</dbReference>
<dbReference type="InterPro" id="IPR055288">
    <property type="entry name" value="NALCN_aux_factor_1/2"/>
</dbReference>
<dbReference type="PANTHER" id="PTHR15819:SF8">
    <property type="entry name" value="NALCN CHANNEL AUXILIARY FACTOR 2"/>
    <property type="match status" value="1"/>
</dbReference>
<dbReference type="PANTHER" id="PTHR15819">
    <property type="entry name" value="TRANSMEMBRANE PROTEIN FAM155"/>
    <property type="match status" value="1"/>
</dbReference>
<feature type="chain" id="PRO_0000339377" description="NALCN channel auxiliary factor 2">
    <location>
        <begin position="1"/>
        <end position="442"/>
    </location>
</feature>
<feature type="transmembrane region" description="Helical" evidence="2">
    <location>
        <begin position="42"/>
        <end position="62"/>
    </location>
</feature>
<feature type="transmembrane region" description="Helical" evidence="2">
    <location>
        <begin position="406"/>
        <end position="426"/>
    </location>
</feature>
<feature type="glycosylation site" description="N-linked (GlcNAc...) asparagine" evidence="2">
    <location>
        <position position="77"/>
    </location>
</feature>
<feature type="glycosylation site" description="N-linked (GlcNAc...) asparagine" evidence="2">
    <location>
        <position position="100"/>
    </location>
</feature>
<feature type="glycosylation site" description="N-linked (GlcNAc...) asparagine" evidence="2">
    <location>
        <position position="171"/>
    </location>
</feature>
<feature type="glycosylation site" description="N-linked (GlcNAc...) asparagine" evidence="2">
    <location>
        <position position="279"/>
    </location>
</feature>
<feature type="glycosylation site" description="N-linked (GlcNAc...) asparagine" evidence="2">
    <location>
        <position position="354"/>
    </location>
</feature>
<evidence type="ECO:0000250" key="1">
    <source>
        <dbReference type="UniProtKB" id="O75949"/>
    </source>
</evidence>
<evidence type="ECO:0000255" key="2"/>
<evidence type="ECO:0000305" key="3"/>
<keyword id="KW-0325">Glycoprotein</keyword>
<keyword id="KW-0472">Membrane</keyword>
<keyword id="KW-1185">Reference proteome</keyword>
<keyword id="KW-0812">Transmembrane</keyword>
<keyword id="KW-1133">Transmembrane helix</keyword>
<protein>
    <recommendedName>
        <fullName>NALCN channel auxiliary factor 2</fullName>
    </recommendedName>
    <alternativeName>
        <fullName>Transmembrane protein FAM155B</fullName>
    </alternativeName>
</protein>
<gene>
    <name type="primary">nalf2</name>
    <name type="synonym">fam155b</name>
</gene>